<dbReference type="EC" id="2.7.4.-" evidence="1"/>
<dbReference type="EMBL" id="AL591688">
    <property type="protein sequence ID" value="CAC41944.1"/>
    <property type="molecule type" value="Genomic_DNA"/>
</dbReference>
<dbReference type="RefSeq" id="NP_384613.1">
    <property type="nucleotide sequence ID" value="NC_003047.1"/>
</dbReference>
<dbReference type="RefSeq" id="WP_010968631.1">
    <property type="nucleotide sequence ID" value="NC_003047.1"/>
</dbReference>
<dbReference type="PDB" id="3CZQ">
    <property type="method" value="X-ray"/>
    <property type="resolution" value="2.23 A"/>
    <property type="chains" value="A/B/C/D=1-300"/>
</dbReference>
<dbReference type="PDB" id="6DZG">
    <property type="method" value="X-ray"/>
    <property type="resolution" value="1.87 A"/>
    <property type="chains" value="A/B/C/D=1-300"/>
</dbReference>
<dbReference type="PDBsum" id="3CZQ"/>
<dbReference type="PDBsum" id="6DZG"/>
<dbReference type="SMR" id="Q92SA6"/>
<dbReference type="DIP" id="DIP-48619N"/>
<dbReference type="EnsemblBacteria" id="CAC41944">
    <property type="protein sequence ID" value="CAC41944"/>
    <property type="gene ID" value="SMc02148"/>
</dbReference>
<dbReference type="KEGG" id="sme:SMc02148"/>
<dbReference type="PATRIC" id="fig|266834.11.peg.1880"/>
<dbReference type="eggNOG" id="COG2326">
    <property type="taxonomic scope" value="Bacteria"/>
</dbReference>
<dbReference type="HOGENOM" id="CLU_048699_2_0_5"/>
<dbReference type="OrthoDB" id="9775224at2"/>
<dbReference type="BRENDA" id="2.7.4.1">
    <property type="organism ID" value="5347"/>
</dbReference>
<dbReference type="EvolutionaryTrace" id="Q92SA6"/>
<dbReference type="Proteomes" id="UP000001976">
    <property type="component" value="Chromosome"/>
</dbReference>
<dbReference type="GO" id="GO:0042802">
    <property type="term" value="F:identical protein binding"/>
    <property type="evidence" value="ECO:0000353"/>
    <property type="project" value="IntAct"/>
</dbReference>
<dbReference type="GO" id="GO:0008976">
    <property type="term" value="F:polyphosphate kinase activity"/>
    <property type="evidence" value="ECO:0007669"/>
    <property type="project" value="UniProtKB-EC"/>
</dbReference>
<dbReference type="GO" id="GO:0006754">
    <property type="term" value="P:ATP biosynthetic process"/>
    <property type="evidence" value="ECO:0007669"/>
    <property type="project" value="UniProtKB-KW"/>
</dbReference>
<dbReference type="FunFam" id="3.40.50.300:FF:003609">
    <property type="entry name" value="Polyphosphate kinase 2"/>
    <property type="match status" value="1"/>
</dbReference>
<dbReference type="Gene3D" id="3.40.50.300">
    <property type="entry name" value="P-loop containing nucleotide triphosphate hydrolases"/>
    <property type="match status" value="1"/>
</dbReference>
<dbReference type="InterPro" id="IPR027417">
    <property type="entry name" value="P-loop_NTPase"/>
</dbReference>
<dbReference type="InterPro" id="IPR022488">
    <property type="entry name" value="PPK2-related"/>
</dbReference>
<dbReference type="InterPro" id="IPR022486">
    <property type="entry name" value="PPK2_PA0141"/>
</dbReference>
<dbReference type="NCBIfam" id="TIGR03707">
    <property type="entry name" value="PPK2_P_aer"/>
    <property type="match status" value="1"/>
</dbReference>
<dbReference type="PANTHER" id="PTHR34383:SF1">
    <property type="entry name" value="ADP-POLYPHOSPHATE PHOSPHOTRANSFERASE"/>
    <property type="match status" value="1"/>
</dbReference>
<dbReference type="PANTHER" id="PTHR34383">
    <property type="entry name" value="POLYPHOSPHATE:AMP PHOSPHOTRANSFERASE-RELATED"/>
    <property type="match status" value="1"/>
</dbReference>
<dbReference type="Pfam" id="PF03976">
    <property type="entry name" value="PPK2"/>
    <property type="match status" value="1"/>
</dbReference>
<dbReference type="SUPFAM" id="SSF52540">
    <property type="entry name" value="P-loop containing nucleoside triphosphate hydrolases"/>
    <property type="match status" value="1"/>
</dbReference>
<evidence type="ECO:0000269" key="1">
    <source>
    </source>
</evidence>
<evidence type="ECO:0000305" key="2"/>
<evidence type="ECO:0000312" key="3">
    <source>
        <dbReference type="EMBL" id="CAC41944.1"/>
    </source>
</evidence>
<evidence type="ECO:0007744" key="4">
    <source>
        <dbReference type="PDB" id="3CZQ"/>
    </source>
</evidence>
<evidence type="ECO:0007829" key="5">
    <source>
        <dbReference type="PDB" id="3CZQ"/>
    </source>
</evidence>
<evidence type="ECO:0007829" key="6">
    <source>
        <dbReference type="PDB" id="6DZG"/>
    </source>
</evidence>
<protein>
    <recommendedName>
        <fullName evidence="2">ADP-polyphosphate phosphotransferase 1</fullName>
        <ecNumber evidence="1">2.7.4.-</ecNumber>
    </recommendedName>
    <alternativeName>
        <fullName evidence="2">Polyphosphate kinase PPK2 1</fullName>
    </alternativeName>
</protein>
<keyword id="KW-0002">3D-structure</keyword>
<keyword id="KW-0066">ATP synthesis</keyword>
<keyword id="KW-0418">Kinase</keyword>
<keyword id="KW-0460">Magnesium</keyword>
<keyword id="KW-1185">Reference proteome</keyword>
<keyword id="KW-0808">Transferase</keyword>
<reference key="1">
    <citation type="journal article" date="2001" name="Proc. Natl. Acad. Sci. U.S.A.">
        <title>Analysis of the chromosome sequence of the legume symbiont Sinorhizobium meliloti strain 1021.</title>
        <authorList>
            <person name="Capela D."/>
            <person name="Barloy-Hubler F."/>
            <person name="Gouzy J."/>
            <person name="Bothe G."/>
            <person name="Ampe F."/>
            <person name="Batut J."/>
            <person name="Boistard P."/>
            <person name="Becker A."/>
            <person name="Boutry M."/>
            <person name="Cadieu E."/>
            <person name="Dreano S."/>
            <person name="Gloux S."/>
            <person name="Godrie T."/>
            <person name="Goffeau A."/>
            <person name="Kahn D."/>
            <person name="Kiss E."/>
            <person name="Lelaure V."/>
            <person name="Masuy D."/>
            <person name="Pohl T."/>
            <person name="Portetelle D."/>
            <person name="Puehler A."/>
            <person name="Purnelle B."/>
            <person name="Ramsperger U."/>
            <person name="Renard C."/>
            <person name="Thebault P."/>
            <person name="Vandenbol M."/>
            <person name="Weidner S."/>
            <person name="Galibert F."/>
        </authorList>
    </citation>
    <scope>NUCLEOTIDE SEQUENCE [LARGE SCALE GENOMIC DNA]</scope>
    <source>
        <strain>1021</strain>
    </source>
</reference>
<reference key="2">
    <citation type="journal article" date="2001" name="Science">
        <title>The composite genome of the legume symbiont Sinorhizobium meliloti.</title>
        <authorList>
            <person name="Galibert F."/>
            <person name="Finan T.M."/>
            <person name="Long S.R."/>
            <person name="Puehler A."/>
            <person name="Abola P."/>
            <person name="Ampe F."/>
            <person name="Barloy-Hubler F."/>
            <person name="Barnett M.J."/>
            <person name="Becker A."/>
            <person name="Boistard P."/>
            <person name="Bothe G."/>
            <person name="Boutry M."/>
            <person name="Bowser L."/>
            <person name="Buhrmester J."/>
            <person name="Cadieu E."/>
            <person name="Capela D."/>
            <person name="Chain P."/>
            <person name="Cowie A."/>
            <person name="Davis R.W."/>
            <person name="Dreano S."/>
            <person name="Federspiel N.A."/>
            <person name="Fisher R.F."/>
            <person name="Gloux S."/>
            <person name="Godrie T."/>
            <person name="Goffeau A."/>
            <person name="Golding B."/>
            <person name="Gouzy J."/>
            <person name="Gurjal M."/>
            <person name="Hernandez-Lucas I."/>
            <person name="Hong A."/>
            <person name="Huizar L."/>
            <person name="Hyman R.W."/>
            <person name="Jones T."/>
            <person name="Kahn D."/>
            <person name="Kahn M.L."/>
            <person name="Kalman S."/>
            <person name="Keating D.H."/>
            <person name="Kiss E."/>
            <person name="Komp C."/>
            <person name="Lelaure V."/>
            <person name="Masuy D."/>
            <person name="Palm C."/>
            <person name="Peck M.C."/>
            <person name="Pohl T.M."/>
            <person name="Portetelle D."/>
            <person name="Purnelle B."/>
            <person name="Ramsperger U."/>
            <person name="Surzycki R."/>
            <person name="Thebault P."/>
            <person name="Vandenbol M."/>
            <person name="Vorhoelter F.J."/>
            <person name="Weidner S."/>
            <person name="Wells D.H."/>
            <person name="Wong K."/>
            <person name="Yeh K.-C."/>
            <person name="Batut J."/>
        </authorList>
    </citation>
    <scope>NUCLEOTIDE SEQUENCE [LARGE SCALE GENOMIC DNA]</scope>
    <source>
        <strain>1021</strain>
    </source>
</reference>
<reference evidence="4" key="3">
    <citation type="journal article" date="2008" name="Proc. Natl. Acad. Sci. U.S.A.">
        <title>Polyphosphate-dependent synthesis of ATP and ADP by the family-2 polyphosphate kinases in bacteria.</title>
        <authorList>
            <person name="Nocek B."/>
            <person name="Kochinyan S."/>
            <person name="Proudfoot M."/>
            <person name="Brown G."/>
            <person name="Evdokimova E."/>
            <person name="Osipiuk J."/>
            <person name="Edwards A.M."/>
            <person name="Savchenko A."/>
            <person name="Joachimiak A."/>
            <person name="Yakunin A.F."/>
        </authorList>
    </citation>
    <scope>X-RAY CRYSTALLOGRAPHY (2.23 ANGSTROMS)</scope>
    <scope>FUNCTION</scope>
    <scope>CATALYTIC ACTIVITY</scope>
    <scope>COFACTOR</scope>
    <scope>BIOPHYSICOCHEMICAL PROPERTIES</scope>
    <scope>SUBUNIT</scope>
    <scope>MUTAGENESIS OF GLU-90; ASP-93; LYS-97; ASP-148; ARG-149; TRP-194; GLN-202; ARG-205; ARG-209; ASP-223; TYR-233 AND ARG-263</scope>
</reference>
<organism>
    <name type="scientific">Rhizobium meliloti (strain 1021)</name>
    <name type="common">Ensifer meliloti</name>
    <name type="synonym">Sinorhizobium meliloti</name>
    <dbReference type="NCBI Taxonomy" id="266834"/>
    <lineage>
        <taxon>Bacteria</taxon>
        <taxon>Pseudomonadati</taxon>
        <taxon>Pseudomonadota</taxon>
        <taxon>Alphaproteobacteria</taxon>
        <taxon>Hyphomicrobiales</taxon>
        <taxon>Rhizobiaceae</taxon>
        <taxon>Sinorhizobium/Ensifer group</taxon>
        <taxon>Sinorhizobium</taxon>
    </lineage>
</organism>
<name>PK21A_RHIME</name>
<accession>Q92SA6</accession>
<proteinExistence type="evidence at protein level"/>
<feature type="chain" id="PRO_0000442589" description="ADP-polyphosphate phosphotransferase 1">
    <location>
        <begin position="1"/>
        <end position="300"/>
    </location>
</feature>
<feature type="mutagenesis site" description="Loss of activity." evidence="1">
    <original>E</original>
    <variation>A</variation>
    <location>
        <position position="90"/>
    </location>
</feature>
<feature type="mutagenesis site" description="Loss of activity." evidence="1">
    <original>D</original>
    <variation>A</variation>
    <location>
        <position position="93"/>
    </location>
</feature>
<feature type="mutagenesis site" description="Loss of activity." evidence="1">
    <original>K</original>
    <variation>A</variation>
    <location>
        <position position="97"/>
    </location>
</feature>
<feature type="mutagenesis site" description="Loss of activity." evidence="1">
    <original>D</original>
    <variation>A</variation>
    <location>
        <position position="148"/>
    </location>
</feature>
<feature type="mutagenesis site" description="Loss of activity." evidence="1">
    <original>R</original>
    <variation>A</variation>
    <location>
        <position position="149"/>
    </location>
</feature>
<feature type="mutagenesis site" description="Strong decrease in activity." evidence="1">
    <original>W</original>
    <variation>A</variation>
    <location>
        <position position="194"/>
    </location>
</feature>
<feature type="mutagenesis site" description="Loss of activity." evidence="1">
    <original>Q</original>
    <variation>A</variation>
    <location>
        <position position="202"/>
    </location>
</feature>
<feature type="mutagenesis site" description="Loss of activity." evidence="1">
    <original>R</original>
    <variation>A</variation>
    <location>
        <position position="205"/>
    </location>
</feature>
<feature type="mutagenesis site" description="Loss of activity." evidence="1">
    <original>R</original>
    <variation>A</variation>
    <location>
        <position position="209"/>
    </location>
</feature>
<feature type="mutagenesis site" description="Loss of activity." evidence="1">
    <original>D</original>
    <variation>A</variation>
    <location>
        <position position="223"/>
    </location>
</feature>
<feature type="mutagenesis site" description="Strong decrease in activity." evidence="1">
    <original>Y</original>
    <variation>A</variation>
    <location>
        <position position="233"/>
    </location>
</feature>
<feature type="mutagenesis site" description="Almost no change in activity." evidence="1">
    <original>R</original>
    <variation>A</variation>
    <location>
        <position position="263"/>
    </location>
</feature>
<feature type="strand" evidence="6">
    <location>
        <begin position="17"/>
        <end position="21"/>
    </location>
</feature>
<feature type="strand" evidence="6">
    <location>
        <begin position="24"/>
        <end position="28"/>
    </location>
</feature>
<feature type="strand" evidence="5">
    <location>
        <begin position="32"/>
        <end position="34"/>
    </location>
</feature>
<feature type="helix" evidence="6">
    <location>
        <begin position="37"/>
        <end position="40"/>
    </location>
</feature>
<feature type="turn" evidence="6">
    <location>
        <begin position="41"/>
        <end position="48"/>
    </location>
</feature>
<feature type="helix" evidence="6">
    <location>
        <begin position="57"/>
        <end position="81"/>
    </location>
</feature>
<feature type="strand" evidence="6">
    <location>
        <begin position="85"/>
        <end position="92"/>
    </location>
</feature>
<feature type="helix" evidence="6">
    <location>
        <begin position="97"/>
        <end position="105"/>
    </location>
</feature>
<feature type="turn" evidence="6">
    <location>
        <begin position="110"/>
        <end position="112"/>
    </location>
</feature>
<feature type="strand" evidence="6">
    <location>
        <begin position="113"/>
        <end position="116"/>
    </location>
</feature>
<feature type="helix" evidence="6">
    <location>
        <begin position="123"/>
        <end position="126"/>
    </location>
</feature>
<feature type="helix" evidence="6">
    <location>
        <begin position="132"/>
        <end position="135"/>
    </location>
</feature>
<feature type="strand" evidence="6">
    <location>
        <begin position="144"/>
        <end position="149"/>
    </location>
</feature>
<feature type="helix" evidence="6">
    <location>
        <begin position="151"/>
        <end position="155"/>
    </location>
</feature>
<feature type="helix" evidence="6">
    <location>
        <begin position="157"/>
        <end position="160"/>
    </location>
</feature>
<feature type="helix" evidence="6">
    <location>
        <begin position="166"/>
        <end position="186"/>
    </location>
</feature>
<feature type="strand" evidence="6">
    <location>
        <begin position="189"/>
        <end position="196"/>
    </location>
</feature>
<feature type="helix" evidence="6">
    <location>
        <begin position="199"/>
        <end position="210"/>
    </location>
</feature>
<feature type="turn" evidence="6">
    <location>
        <begin position="213"/>
        <end position="215"/>
    </location>
</feature>
<feature type="helix" evidence="6">
    <location>
        <begin position="216"/>
        <end position="218"/>
    </location>
</feature>
<feature type="helix" evidence="6">
    <location>
        <begin position="221"/>
        <end position="226"/>
    </location>
</feature>
<feature type="helix" evidence="6">
    <location>
        <begin position="227"/>
        <end position="229"/>
    </location>
</feature>
<feature type="helix" evidence="6">
    <location>
        <begin position="230"/>
        <end position="244"/>
    </location>
</feature>
<feature type="strand" evidence="6">
    <location>
        <begin position="247"/>
        <end position="249"/>
    </location>
</feature>
<feature type="strand" evidence="6">
    <location>
        <begin position="251"/>
        <end position="255"/>
    </location>
</feature>
<feature type="helix" evidence="6">
    <location>
        <begin position="259"/>
        <end position="273"/>
    </location>
</feature>
<feature type="helix" evidence="6">
    <location>
        <begin position="281"/>
        <end position="284"/>
    </location>
</feature>
<feature type="turn" evidence="6">
    <location>
        <begin position="289"/>
        <end position="291"/>
    </location>
</feature>
<feature type="strand" evidence="6">
    <location>
        <begin position="292"/>
        <end position="295"/>
    </location>
</feature>
<sequence length="300" mass="34847">MALDEAPAEARPGSRAVELEIDGRSRIFDIDDPDLPKWIDEEAFRSDDYPYKKKLDREEYEETLTKLQIELVKVQFWMQATGKRVMAVFEGRDAAGKGGAIHATTANMNPRSARVVALTKPTETERGQWYFQRYVATFPTAGEFVLFDRSWYNRAGVEPVMGFCTPDQYEQFLKEAPRFEEMIANEGIHLFKFWINIGREMQLKRFHDRRHDPLKIWKLSPMDIAALSKWDDYTGKRDRMLKETHTEHGPWAVIRGNDKRRSRINVIRHMLTKLDYDGKDEAAIGEVDEKILGSGPGFLR</sequence>
<gene>
    <name evidence="2" type="ordered locus">R00507</name>
    <name evidence="3" type="ORF">SMc02148</name>
</gene>
<comment type="function">
    <text evidence="1">Uses inorganic polyphosphate (polyP) as a donor to convert ADP to ATP. Can also convert GDP to GTP, with lower efficiency. Cannot dephosphorylate ATP in the presence of polyP.</text>
</comment>
<comment type="catalytic activity">
    <reaction evidence="1">
        <text>[phosphate](n) + ATP = [phosphate](n+1) + ADP</text>
        <dbReference type="Rhea" id="RHEA:19573"/>
        <dbReference type="Rhea" id="RHEA-COMP:9859"/>
        <dbReference type="Rhea" id="RHEA-COMP:14280"/>
        <dbReference type="ChEBI" id="CHEBI:16838"/>
        <dbReference type="ChEBI" id="CHEBI:30616"/>
        <dbReference type="ChEBI" id="CHEBI:456216"/>
    </reaction>
    <physiologicalReaction direction="right-to-left" evidence="1">
        <dbReference type="Rhea" id="RHEA:19575"/>
    </physiologicalReaction>
</comment>
<comment type="catalytic activity">
    <reaction evidence="1">
        <text>[phosphate](n) + GTP = [phosphate](n+1) + GDP</text>
        <dbReference type="Rhea" id="RHEA:55412"/>
        <dbReference type="Rhea" id="RHEA-COMP:9859"/>
        <dbReference type="Rhea" id="RHEA-COMP:14280"/>
        <dbReference type="ChEBI" id="CHEBI:16838"/>
        <dbReference type="ChEBI" id="CHEBI:37565"/>
        <dbReference type="ChEBI" id="CHEBI:58189"/>
    </reaction>
    <physiologicalReaction direction="right-to-left" evidence="1">
        <dbReference type="Rhea" id="RHEA:55414"/>
    </physiologicalReaction>
</comment>
<comment type="cofactor">
    <cofactor evidence="1">
        <name>Mg(2+)</name>
        <dbReference type="ChEBI" id="CHEBI:18420"/>
    </cofactor>
    <text evidence="1">Has low activity with Co(2+) or Ni(2+).</text>
</comment>
<comment type="biophysicochemical properties">
    <kinetics>
        <KM evidence="1">21 uM for polyP</KM>
        <KM evidence="1">32 uM for ADP</KM>
        <KM evidence="1">520 uM for GDP</KM>
        <text evidence="1">kcat is 8.6 sec(-1) with polyP as substrate. kcat is 7.6 sec(-1) with ADP as substrate. kcat is 0.8 sec(-1) with GDP as substrate.</text>
    </kinetics>
    <phDependence>
        <text evidence="1">Optimum pH is 8.0-9.5.</text>
    </phDependence>
</comment>
<comment type="subunit">
    <text evidence="1">Homotetramer.</text>
</comment>
<comment type="interaction">
    <interactant intactId="EBI-15739743">
        <id>Q92SA6</id>
    </interactant>
    <interactant intactId="EBI-15739743">
        <id>Q92SA6</id>
        <label>SMc02148</label>
    </interactant>
    <organismsDiffer>false</organismsDiffer>
    <experiments>2</experiments>
</comment>
<comment type="similarity">
    <text evidence="2">Belongs to the polyphosphate kinase 2 (PPK2) family. Class I subfamily.</text>
</comment>